<gene>
    <name type="primary">Drp2</name>
</gene>
<sequence length="957" mass="108045">MQPLVMQGCPYTLPRCHEWHAADRFHHSSSLRNTCPQPQVRAAVTIPAPPWDGAGDPCLSPKLLNGSVGAVGPLEPSAMNLCWNEIKKKSHNLRARLEAFSDHSGKLQLPLQEIIDWLSQKDEELSAQLPLQGDVALVQQEKETHAAFMEEVKSKGPYIYSVLESAQAFLSQHPFEELEESHSESKDTSPRQRIQNLSRFVWKQATVASELWEKLTARCVDQHRHIEHTLEHLLEIQGAMEELSSTLTQAEGVRATWEPIGDLFIDSLPEHIQAIKLFKEEFSPVKDGVKLVNDLAHQLAISDVHLSMENSRALEQINVRWKQLQVSVAERLKQLQDAHRDFGPGSQHFLSTSVQVPWERAISPNKVPYYINHQAQTTCWDHPKMTELYQTLADLNNIKFSAYRTAMKLRRVQKALRLDLVTLTTALEIFNEHDLQASEHVMDVVEVIHCLTALYERLEEERGILVNVPLCVDMSLNWLLNVFDSGRSGKMRALSFKTGIACLCGTEVKEKLQYLFSQVANSGSQCDQRHLGALLHEAIQVPRQLGEVAAFGGSNVEPSVRSCFRFSTGKPVIEASQFLEWVNLEPQSMVWLAVLHRVTVAEQVKHQTKCSICRQCPIKGFRYRSLKQFNVDICQTCFLTGKASKGNKLHYPIMEYYTPTTSSENMRDFATTLKNKFRSKQYFSKHPQRGYLPVQSVLESDCSETPASSPMLPHADTHSRIEHFASRLAEMESQNCSFFNDSLSPDDSIDEDQYLLRHSSPITDREPAFGQQAPCSMATESKGELEKILAHLEDENRILQGELRRLKWQHEEAVEAPTLAEGSAEATPDHRNEELLAEARILRQHKSRLETRMQILEDHNKQLESQLQRLRELLLQPPTESDGNGSAGSSLASSPRQSEGSHPREKGQTTPDTEAADDVGSKSQDVSLCLEDIMEKLRHAFPSVRSSDVTANTLLAS</sequence>
<keyword id="KW-1003">Cell membrane</keyword>
<keyword id="KW-0966">Cell projection</keyword>
<keyword id="KW-0472">Membrane</keyword>
<keyword id="KW-0479">Metal-binding</keyword>
<keyword id="KW-0597">Phosphoprotein</keyword>
<keyword id="KW-1185">Reference proteome</keyword>
<keyword id="KW-0677">Repeat</keyword>
<keyword id="KW-0770">Synapse</keyword>
<keyword id="KW-0862">Zinc</keyword>
<keyword id="KW-0863">Zinc-finger</keyword>
<feature type="chain" id="PRO_0000345016" description="Dystrophin-related protein 2">
    <location>
        <begin position="1"/>
        <end position="957"/>
    </location>
</feature>
<feature type="repeat" description="Spectrin 1">
    <location>
        <begin position="102"/>
        <end position="179"/>
    </location>
</feature>
<feature type="repeat" description="Spectrin 2">
    <location>
        <begin position="231"/>
        <end position="337"/>
    </location>
</feature>
<feature type="domain" description="WW" evidence="3">
    <location>
        <begin position="358"/>
        <end position="383"/>
    </location>
</feature>
<feature type="zinc finger region" description="ZZ-type; degenerate" evidence="4">
    <location>
        <begin position="605"/>
        <end position="661"/>
    </location>
</feature>
<feature type="region of interest" description="Disordered" evidence="5">
    <location>
        <begin position="877"/>
        <end position="923"/>
    </location>
</feature>
<feature type="compositionally biased region" description="Low complexity" evidence="5">
    <location>
        <begin position="877"/>
        <end position="894"/>
    </location>
</feature>
<feature type="binding site" evidence="4">
    <location>
        <position position="610"/>
    </location>
    <ligand>
        <name>Zn(2+)</name>
        <dbReference type="ChEBI" id="CHEBI:29105"/>
    </ligand>
</feature>
<feature type="binding site" evidence="4">
    <location>
        <position position="613"/>
    </location>
    <ligand>
        <name>Zn(2+)</name>
        <dbReference type="ChEBI" id="CHEBI:29105"/>
    </ligand>
</feature>
<feature type="binding site" evidence="4">
    <location>
        <position position="634"/>
    </location>
    <ligand>
        <name>Zn(2+)</name>
        <dbReference type="ChEBI" id="CHEBI:29105"/>
    </ligand>
</feature>
<feature type="binding site" evidence="4">
    <location>
        <position position="637"/>
    </location>
    <ligand>
        <name>Zn(2+)</name>
        <dbReference type="ChEBI" id="CHEBI:29105"/>
    </ligand>
</feature>
<feature type="modified residue" description="Phosphoserine" evidence="2">
    <location>
        <position position="748"/>
    </location>
</feature>
<feature type="modified residue" description="Phosphothreonine" evidence="2">
    <location>
        <position position="910"/>
    </location>
</feature>
<feature type="sequence conflict" description="In Ref. 1; AAG28484/AAG28485." evidence="8" ref="1">
    <original>Q</original>
    <variation>K</variation>
    <location>
        <position position="525"/>
    </location>
</feature>
<feature type="sequence conflict" description="In Ref. 1; AAG28484/AAG28485." evidence="8" ref="1">
    <original>K</original>
    <variation>R</variation>
    <location>
        <position position="642"/>
    </location>
</feature>
<feature type="sequence conflict" description="In Ref. 1; AAG28484/AAG28485." evidence="8" ref="1">
    <original>LC</original>
    <variation>HS</variation>
    <location>
        <begin position="928"/>
        <end position="929"/>
    </location>
</feature>
<reference key="1">
    <citation type="journal article" date="2000" name="Mol. Cell. Neurosci.">
        <title>Association of dystrophin-related protein 2 (DRP2) with postsynaptic densities in rat brain.</title>
        <authorList>
            <person name="Roberts R.G."/>
            <person name="Sheng M."/>
        </authorList>
    </citation>
    <scope>NUCLEOTIDE SEQUENCE [MRNA]</scope>
    <scope>SUBCELLULAR LOCATION</scope>
    <scope>TISSUE SPECIFICITY</scope>
    <source>
        <strain>Sprague-Dawley</strain>
    </source>
</reference>
<reference key="2">
    <citation type="journal article" date="2004" name="Nature">
        <title>Genome sequence of the Brown Norway rat yields insights into mammalian evolution.</title>
        <authorList>
            <person name="Gibbs R.A."/>
            <person name="Weinstock G.M."/>
            <person name="Metzker M.L."/>
            <person name="Muzny D.M."/>
            <person name="Sodergren E.J."/>
            <person name="Scherer S."/>
            <person name="Scott G."/>
            <person name="Steffen D."/>
            <person name="Worley K.C."/>
            <person name="Burch P.E."/>
            <person name="Okwuonu G."/>
            <person name="Hines S."/>
            <person name="Lewis L."/>
            <person name="Deramo C."/>
            <person name="Delgado O."/>
            <person name="Dugan-Rocha S."/>
            <person name="Miner G."/>
            <person name="Morgan M."/>
            <person name="Hawes A."/>
            <person name="Gill R."/>
            <person name="Holt R.A."/>
            <person name="Adams M.D."/>
            <person name="Amanatides P.G."/>
            <person name="Baden-Tillson H."/>
            <person name="Barnstead M."/>
            <person name="Chin S."/>
            <person name="Evans C.A."/>
            <person name="Ferriera S."/>
            <person name="Fosler C."/>
            <person name="Glodek A."/>
            <person name="Gu Z."/>
            <person name="Jennings D."/>
            <person name="Kraft C.L."/>
            <person name="Nguyen T."/>
            <person name="Pfannkoch C.M."/>
            <person name="Sitter C."/>
            <person name="Sutton G.G."/>
            <person name="Venter J.C."/>
            <person name="Woodage T."/>
            <person name="Smith D."/>
            <person name="Lee H.-M."/>
            <person name="Gustafson E."/>
            <person name="Cahill P."/>
            <person name="Kana A."/>
            <person name="Doucette-Stamm L."/>
            <person name="Weinstock K."/>
            <person name="Fechtel K."/>
            <person name="Weiss R.B."/>
            <person name="Dunn D.M."/>
            <person name="Green E.D."/>
            <person name="Blakesley R.W."/>
            <person name="Bouffard G.G."/>
            <person name="De Jong P.J."/>
            <person name="Osoegawa K."/>
            <person name="Zhu B."/>
            <person name="Marra M."/>
            <person name="Schein J."/>
            <person name="Bosdet I."/>
            <person name="Fjell C."/>
            <person name="Jones S."/>
            <person name="Krzywinski M."/>
            <person name="Mathewson C."/>
            <person name="Siddiqui A."/>
            <person name="Wye N."/>
            <person name="McPherson J."/>
            <person name="Zhao S."/>
            <person name="Fraser C.M."/>
            <person name="Shetty J."/>
            <person name="Shatsman S."/>
            <person name="Geer K."/>
            <person name="Chen Y."/>
            <person name="Abramzon S."/>
            <person name="Nierman W.C."/>
            <person name="Havlak P.H."/>
            <person name="Chen R."/>
            <person name="Durbin K.J."/>
            <person name="Egan A."/>
            <person name="Ren Y."/>
            <person name="Song X.-Z."/>
            <person name="Li B."/>
            <person name="Liu Y."/>
            <person name="Qin X."/>
            <person name="Cawley S."/>
            <person name="Cooney A.J."/>
            <person name="D'Souza L.M."/>
            <person name="Martin K."/>
            <person name="Wu J.Q."/>
            <person name="Gonzalez-Garay M.L."/>
            <person name="Jackson A.R."/>
            <person name="Kalafus K.J."/>
            <person name="McLeod M.P."/>
            <person name="Milosavljevic A."/>
            <person name="Virk D."/>
            <person name="Volkov A."/>
            <person name="Wheeler D.A."/>
            <person name="Zhang Z."/>
            <person name="Bailey J.A."/>
            <person name="Eichler E.E."/>
            <person name="Tuzun E."/>
            <person name="Birney E."/>
            <person name="Mongin E."/>
            <person name="Ureta-Vidal A."/>
            <person name="Woodwark C."/>
            <person name="Zdobnov E."/>
            <person name="Bork P."/>
            <person name="Suyama M."/>
            <person name="Torrents D."/>
            <person name="Alexandersson M."/>
            <person name="Trask B.J."/>
            <person name="Young J.M."/>
            <person name="Huang H."/>
            <person name="Wang H."/>
            <person name="Xing H."/>
            <person name="Daniels S."/>
            <person name="Gietzen D."/>
            <person name="Schmidt J."/>
            <person name="Stevens K."/>
            <person name="Vitt U."/>
            <person name="Wingrove J."/>
            <person name="Camara F."/>
            <person name="Mar Alba M."/>
            <person name="Abril J.F."/>
            <person name="Guigo R."/>
            <person name="Smit A."/>
            <person name="Dubchak I."/>
            <person name="Rubin E.M."/>
            <person name="Couronne O."/>
            <person name="Poliakov A."/>
            <person name="Huebner N."/>
            <person name="Ganten D."/>
            <person name="Goesele C."/>
            <person name="Hummel O."/>
            <person name="Kreitler T."/>
            <person name="Lee Y.-A."/>
            <person name="Monti J."/>
            <person name="Schulz H."/>
            <person name="Zimdahl H."/>
            <person name="Himmelbauer H."/>
            <person name="Lehrach H."/>
            <person name="Jacob H.J."/>
            <person name="Bromberg S."/>
            <person name="Gullings-Handley J."/>
            <person name="Jensen-Seaman M.I."/>
            <person name="Kwitek A.E."/>
            <person name="Lazar J."/>
            <person name="Pasko D."/>
            <person name="Tonellato P.J."/>
            <person name="Twigger S."/>
            <person name="Ponting C.P."/>
            <person name="Duarte J.M."/>
            <person name="Rice S."/>
            <person name="Goodstadt L."/>
            <person name="Beatson S.A."/>
            <person name="Emes R.D."/>
            <person name="Winter E.E."/>
            <person name="Webber C."/>
            <person name="Brandt P."/>
            <person name="Nyakatura G."/>
            <person name="Adetobi M."/>
            <person name="Chiaromonte F."/>
            <person name="Elnitski L."/>
            <person name="Eswara P."/>
            <person name="Hardison R.C."/>
            <person name="Hou M."/>
            <person name="Kolbe D."/>
            <person name="Makova K."/>
            <person name="Miller W."/>
            <person name="Nekrutenko A."/>
            <person name="Riemer C."/>
            <person name="Schwartz S."/>
            <person name="Taylor J."/>
            <person name="Yang S."/>
            <person name="Zhang Y."/>
            <person name="Lindpaintner K."/>
            <person name="Andrews T.D."/>
            <person name="Caccamo M."/>
            <person name="Clamp M."/>
            <person name="Clarke L."/>
            <person name="Curwen V."/>
            <person name="Durbin R.M."/>
            <person name="Eyras E."/>
            <person name="Searle S.M."/>
            <person name="Cooper G.M."/>
            <person name="Batzoglou S."/>
            <person name="Brudno M."/>
            <person name="Sidow A."/>
            <person name="Stone E.A."/>
            <person name="Payseur B.A."/>
            <person name="Bourque G."/>
            <person name="Lopez-Otin C."/>
            <person name="Puente X.S."/>
            <person name="Chakrabarti K."/>
            <person name="Chatterji S."/>
            <person name="Dewey C."/>
            <person name="Pachter L."/>
            <person name="Bray N."/>
            <person name="Yap V.B."/>
            <person name="Caspi A."/>
            <person name="Tesler G."/>
            <person name="Pevzner P.A."/>
            <person name="Haussler D."/>
            <person name="Roskin K.M."/>
            <person name="Baertsch R."/>
            <person name="Clawson H."/>
            <person name="Furey T.S."/>
            <person name="Hinrichs A.S."/>
            <person name="Karolchik D."/>
            <person name="Kent W.J."/>
            <person name="Rosenbloom K.R."/>
            <person name="Trumbower H."/>
            <person name="Weirauch M."/>
            <person name="Cooper D.N."/>
            <person name="Stenson P.D."/>
            <person name="Ma B."/>
            <person name="Brent M."/>
            <person name="Arumugam M."/>
            <person name="Shteynberg D."/>
            <person name="Copley R.R."/>
            <person name="Taylor M.S."/>
            <person name="Riethman H."/>
            <person name="Mudunuri U."/>
            <person name="Peterson J."/>
            <person name="Guyer M."/>
            <person name="Felsenfeld A."/>
            <person name="Old S."/>
            <person name="Mockrin S."/>
            <person name="Collins F.S."/>
        </authorList>
    </citation>
    <scope>NUCLEOTIDE SEQUENCE [LARGE SCALE GENOMIC DNA]</scope>
    <source>
        <strain>Brown Norway</strain>
    </source>
</reference>
<reference key="3">
    <citation type="submission" date="2005-09" db="EMBL/GenBank/DDBJ databases">
        <authorList>
            <person name="Mural R.J."/>
            <person name="Adams M.D."/>
            <person name="Myers E.W."/>
            <person name="Smith H.O."/>
            <person name="Venter J.C."/>
        </authorList>
    </citation>
    <scope>NUCLEOTIDE SEQUENCE [LARGE SCALE GENOMIC DNA]</scope>
    <source>
        <strain evidence="10">Brown Norway</strain>
    </source>
</reference>
<reference key="4">
    <citation type="journal article" date="2001" name="Neuron">
        <title>Specific disruption of a Schwann cell dystrophin-related protein complex in a demyelinating neuropathy.</title>
        <authorList>
            <person name="Sherman D.L."/>
            <person name="Fabrizi C."/>
            <person name="Gillespie C.S."/>
            <person name="Brophy P.J."/>
        </authorList>
    </citation>
    <scope>INTERACTION WITH PRX</scope>
    <scope>SUBCELLULAR LOCATION</scope>
    <scope>TISSUE SPECIFICITY</scope>
</reference>
<reference key="5">
    <citation type="journal article" date="2012" name="Nat. Commun.">
        <title>Quantitative maps of protein phosphorylation sites across 14 different rat organs and tissues.</title>
        <authorList>
            <person name="Lundby A."/>
            <person name="Secher A."/>
            <person name="Lage K."/>
            <person name="Nordsborg N.B."/>
            <person name="Dmytriyev A."/>
            <person name="Lundby C."/>
            <person name="Olsen J.V."/>
        </authorList>
    </citation>
    <scope>IDENTIFICATION BY MASS SPECTROMETRY [LARGE SCALE ANALYSIS]</scope>
</reference>
<evidence type="ECO:0000250" key="1"/>
<evidence type="ECO:0000250" key="2">
    <source>
        <dbReference type="UniProtKB" id="Q05AA6"/>
    </source>
</evidence>
<evidence type="ECO:0000255" key="3">
    <source>
        <dbReference type="PROSITE-ProRule" id="PRU00224"/>
    </source>
</evidence>
<evidence type="ECO:0000255" key="4">
    <source>
        <dbReference type="PROSITE-ProRule" id="PRU00228"/>
    </source>
</evidence>
<evidence type="ECO:0000256" key="5">
    <source>
        <dbReference type="SAM" id="MobiDB-lite"/>
    </source>
</evidence>
<evidence type="ECO:0000269" key="6">
    <source>
    </source>
</evidence>
<evidence type="ECO:0000269" key="7">
    <source>
    </source>
</evidence>
<evidence type="ECO:0000305" key="8"/>
<evidence type="ECO:0000305" key="9">
    <source>
    </source>
</evidence>
<evidence type="ECO:0000312" key="10">
    <source>
        <dbReference type="EMBL" id="EDM07026.1"/>
    </source>
</evidence>
<protein>
    <recommendedName>
        <fullName>Dystrophin-related protein 2</fullName>
        <shortName>DRP-2</shortName>
    </recommendedName>
</protein>
<name>DRP2_RAT</name>
<comment type="function">
    <text evidence="1 2">Required for normal myelination and for normal organization of the cytoplasm and the formation of Cajal bands in myelinating Schwann cells. Required for normal PRX location at appositions between the abaxonal surface of the myelin sheath and the Schwann cell plasma membrane. Possibly involved in membrane-cytoskeleton interactions of the central nervous system.</text>
</comment>
<comment type="subunit">
    <text evidence="2 7">Interacts with PRX; this enhances phosphorylation (PubMed:11430802). Identified in a dystroglycan complex that contains at least PRX, DRP2, UTRN, DMD and DAG1 (By similarity).</text>
</comment>
<comment type="subcellular location">
    <subcellularLocation>
        <location evidence="6">Postsynaptic density</location>
    </subcellularLocation>
    <subcellularLocation>
        <location evidence="6">Cell projection</location>
        <location evidence="6">Dendrite</location>
    </subcellularLocation>
    <subcellularLocation>
        <location evidence="6">Perikaryon</location>
    </subcellularLocation>
    <subcellularLocation>
        <location evidence="7 9">Cell membrane</location>
        <topology evidence="8">Peripheral membrane protein</topology>
    </subcellularLocation>
    <text evidence="7">Detected in Schwann cells at periaxonal myelin membranes.</text>
</comment>
<comment type="tissue specificity">
    <text evidence="6 7">Detected in trigeminal nerve Schwann cells (PubMed:11430802). Detected in brain cortex and hippocampus. Detected in brain membrane fractions and highly enriched in the postsynaptic density (at protein level).</text>
</comment>
<accession>Q9EPA0</accession>
<accession>G3V971</accession>
<organism>
    <name type="scientific">Rattus norvegicus</name>
    <name type="common">Rat</name>
    <dbReference type="NCBI Taxonomy" id="10116"/>
    <lineage>
        <taxon>Eukaryota</taxon>
        <taxon>Metazoa</taxon>
        <taxon>Chordata</taxon>
        <taxon>Craniata</taxon>
        <taxon>Vertebrata</taxon>
        <taxon>Euteleostomi</taxon>
        <taxon>Mammalia</taxon>
        <taxon>Eutheria</taxon>
        <taxon>Euarchontoglires</taxon>
        <taxon>Glires</taxon>
        <taxon>Rodentia</taxon>
        <taxon>Myomorpha</taxon>
        <taxon>Muroidea</taxon>
        <taxon>Muridae</taxon>
        <taxon>Murinae</taxon>
        <taxon>Rattus</taxon>
    </lineage>
</organism>
<proteinExistence type="evidence at protein level"/>
<dbReference type="EMBL" id="AF195787">
    <property type="protein sequence ID" value="AAG28484.1"/>
    <property type="molecule type" value="mRNA"/>
</dbReference>
<dbReference type="EMBL" id="AF195788">
    <property type="protein sequence ID" value="AAG28485.1"/>
    <property type="molecule type" value="mRNA"/>
</dbReference>
<dbReference type="EMBL" id="AC094684">
    <property type="status" value="NOT_ANNOTATED_CDS"/>
    <property type="molecule type" value="Genomic_DNA"/>
</dbReference>
<dbReference type="EMBL" id="CH473969">
    <property type="protein sequence ID" value="EDM07026.1"/>
    <property type="molecule type" value="Genomic_DNA"/>
</dbReference>
<dbReference type="EMBL" id="CH473969">
    <property type="protein sequence ID" value="EDM07027.1"/>
    <property type="molecule type" value="Genomic_DNA"/>
</dbReference>
<dbReference type="EMBL" id="CH473969">
    <property type="protein sequence ID" value="EDM07028.1"/>
    <property type="molecule type" value="Genomic_DNA"/>
</dbReference>
<dbReference type="RefSeq" id="NP_001382005.1">
    <property type="nucleotide sequence ID" value="NM_001395076.1"/>
</dbReference>
<dbReference type="RefSeq" id="NP_076461.2">
    <property type="nucleotide sequence ID" value="NM_023971.2"/>
</dbReference>
<dbReference type="RefSeq" id="XP_008771655.1">
    <property type="nucleotide sequence ID" value="XM_008773433.4"/>
</dbReference>
<dbReference type="RefSeq" id="XP_063136361.1">
    <property type="nucleotide sequence ID" value="XM_063280291.1"/>
</dbReference>
<dbReference type="SMR" id="Q9EPA0"/>
<dbReference type="BioGRID" id="249354">
    <property type="interactions" value="2"/>
</dbReference>
<dbReference type="FunCoup" id="Q9EPA0">
    <property type="interactions" value="56"/>
</dbReference>
<dbReference type="STRING" id="10116.ENSRNOP00000070220"/>
<dbReference type="GlyGen" id="Q9EPA0">
    <property type="glycosylation" value="1 site"/>
</dbReference>
<dbReference type="iPTMnet" id="Q9EPA0"/>
<dbReference type="PhosphoSitePlus" id="Q9EPA0"/>
<dbReference type="PaxDb" id="10116-ENSRNOP00000037371"/>
<dbReference type="Ensembl" id="ENSRNOT00000039864.4">
    <property type="protein sequence ID" value="ENSRNOP00000037371.3"/>
    <property type="gene ID" value="ENSRNOG00000026704.7"/>
</dbReference>
<dbReference type="GeneID" id="66027"/>
<dbReference type="KEGG" id="rno:66027"/>
<dbReference type="UCSC" id="RGD:621750">
    <property type="organism name" value="rat"/>
</dbReference>
<dbReference type="AGR" id="RGD:621750"/>
<dbReference type="CTD" id="1821"/>
<dbReference type="RGD" id="621750">
    <property type="gene designation" value="Drp2"/>
</dbReference>
<dbReference type="eggNOG" id="KOG4286">
    <property type="taxonomic scope" value="Eukaryota"/>
</dbReference>
<dbReference type="GeneTree" id="ENSGT00940000153467"/>
<dbReference type="InParanoid" id="Q9EPA0"/>
<dbReference type="OMA" id="WRAADHF"/>
<dbReference type="OrthoDB" id="10057795at2759"/>
<dbReference type="Reactome" id="R-RNO-9913351">
    <property type="pathway name" value="Formation of the dystrophin-glycoprotein complex (DGC)"/>
</dbReference>
<dbReference type="PRO" id="PR:Q9EPA0"/>
<dbReference type="Proteomes" id="UP000002494">
    <property type="component" value="Chromosome X"/>
</dbReference>
<dbReference type="Proteomes" id="UP000234681">
    <property type="component" value="Chromosome x"/>
</dbReference>
<dbReference type="Bgee" id="ENSRNOG00000026704">
    <property type="expression patterns" value="Expressed in frontal cortex and 9 other cell types or tissues"/>
</dbReference>
<dbReference type="GO" id="GO:0030425">
    <property type="term" value="C:dendrite"/>
    <property type="evidence" value="ECO:0000314"/>
    <property type="project" value="RGD"/>
</dbReference>
<dbReference type="GO" id="GO:0098978">
    <property type="term" value="C:glutamatergic synapse"/>
    <property type="evidence" value="ECO:0000314"/>
    <property type="project" value="SynGO"/>
</dbReference>
<dbReference type="GO" id="GO:0043204">
    <property type="term" value="C:perikaryon"/>
    <property type="evidence" value="ECO:0007669"/>
    <property type="project" value="UniProtKB-SubCell"/>
</dbReference>
<dbReference type="GO" id="GO:0005886">
    <property type="term" value="C:plasma membrane"/>
    <property type="evidence" value="ECO:0000266"/>
    <property type="project" value="RGD"/>
</dbReference>
<dbReference type="GO" id="GO:0014069">
    <property type="term" value="C:postsynaptic density"/>
    <property type="evidence" value="ECO:0000314"/>
    <property type="project" value="SynGO"/>
</dbReference>
<dbReference type="GO" id="GO:0008270">
    <property type="term" value="F:zinc ion binding"/>
    <property type="evidence" value="ECO:0007669"/>
    <property type="project" value="UniProtKB-KW"/>
</dbReference>
<dbReference type="GO" id="GO:0007417">
    <property type="term" value="P:central nervous system development"/>
    <property type="evidence" value="ECO:0007669"/>
    <property type="project" value="InterPro"/>
</dbReference>
<dbReference type="GO" id="GO:0050808">
    <property type="term" value="P:synapse organization"/>
    <property type="evidence" value="ECO:0000315"/>
    <property type="project" value="RGD"/>
</dbReference>
<dbReference type="GO" id="GO:0099536">
    <property type="term" value="P:synaptic signaling"/>
    <property type="evidence" value="ECO:0000318"/>
    <property type="project" value="GO_Central"/>
</dbReference>
<dbReference type="CDD" id="cd16248">
    <property type="entry name" value="EFh_DRP-2"/>
    <property type="match status" value="1"/>
</dbReference>
<dbReference type="CDD" id="cd00176">
    <property type="entry name" value="SPEC"/>
    <property type="match status" value="1"/>
</dbReference>
<dbReference type="CDD" id="cd00201">
    <property type="entry name" value="WW"/>
    <property type="match status" value="1"/>
</dbReference>
<dbReference type="CDD" id="cd02334">
    <property type="entry name" value="ZZ_dystrophin"/>
    <property type="match status" value="1"/>
</dbReference>
<dbReference type="FunFam" id="1.10.238.10:FF:000008">
    <property type="entry name" value="Dystrophin isoform 2"/>
    <property type="match status" value="1"/>
</dbReference>
<dbReference type="FunFam" id="3.30.60.90:FF:000001">
    <property type="entry name" value="Dystrophin isoform 2"/>
    <property type="match status" value="1"/>
</dbReference>
<dbReference type="FunFam" id="1.10.238.10:FF:000023">
    <property type="entry name" value="dystrophin isoform X1"/>
    <property type="match status" value="1"/>
</dbReference>
<dbReference type="FunFam" id="2.20.70.10:FF:000004">
    <property type="entry name" value="dystrophin isoform X1"/>
    <property type="match status" value="1"/>
</dbReference>
<dbReference type="FunFam" id="1.20.58.60:FF:000401">
    <property type="entry name" value="Dystrophin-related protein 2"/>
    <property type="match status" value="1"/>
</dbReference>
<dbReference type="FunFam" id="1.20.58.60:FF:000029">
    <property type="entry name" value="utrophin isoform X1"/>
    <property type="match status" value="1"/>
</dbReference>
<dbReference type="Gene3D" id="1.20.58.60">
    <property type="match status" value="2"/>
</dbReference>
<dbReference type="Gene3D" id="2.20.70.10">
    <property type="match status" value="1"/>
</dbReference>
<dbReference type="Gene3D" id="3.30.60.90">
    <property type="match status" value="1"/>
</dbReference>
<dbReference type="Gene3D" id="1.10.238.10">
    <property type="entry name" value="EF-hand"/>
    <property type="match status" value="2"/>
</dbReference>
<dbReference type="InterPro" id="IPR017433">
    <property type="entry name" value="Dystrophin-related_2"/>
</dbReference>
<dbReference type="InterPro" id="IPR011992">
    <property type="entry name" value="EF-hand-dom_pair"/>
</dbReference>
<dbReference type="InterPro" id="IPR015153">
    <property type="entry name" value="EF-hand_dom_typ1"/>
</dbReference>
<dbReference type="InterPro" id="IPR015154">
    <property type="entry name" value="EF-hand_dom_typ2"/>
</dbReference>
<dbReference type="InterPro" id="IPR050774">
    <property type="entry name" value="KCMF1/Dystrophin"/>
</dbReference>
<dbReference type="InterPro" id="IPR018159">
    <property type="entry name" value="Spectrin/alpha-actinin"/>
</dbReference>
<dbReference type="InterPro" id="IPR002017">
    <property type="entry name" value="Spectrin_repeat"/>
</dbReference>
<dbReference type="InterPro" id="IPR001202">
    <property type="entry name" value="WW_dom"/>
</dbReference>
<dbReference type="InterPro" id="IPR036020">
    <property type="entry name" value="WW_dom_sf"/>
</dbReference>
<dbReference type="InterPro" id="IPR000433">
    <property type="entry name" value="Znf_ZZ"/>
</dbReference>
<dbReference type="InterPro" id="IPR043145">
    <property type="entry name" value="Znf_ZZ_sf"/>
</dbReference>
<dbReference type="PANTHER" id="PTHR12268:SF16">
    <property type="entry name" value="DYSTROPHIN-RELATED PROTEIN 2"/>
    <property type="match status" value="1"/>
</dbReference>
<dbReference type="PANTHER" id="PTHR12268">
    <property type="entry name" value="E3 UBIQUITIN-PROTEIN LIGASE KCMF1"/>
    <property type="match status" value="1"/>
</dbReference>
<dbReference type="Pfam" id="PF09068">
    <property type="entry name" value="EF-hand_2"/>
    <property type="match status" value="1"/>
</dbReference>
<dbReference type="Pfam" id="PF09069">
    <property type="entry name" value="EF-hand_3"/>
    <property type="match status" value="1"/>
</dbReference>
<dbReference type="Pfam" id="PF00435">
    <property type="entry name" value="Spectrin"/>
    <property type="match status" value="1"/>
</dbReference>
<dbReference type="Pfam" id="PF00397">
    <property type="entry name" value="WW"/>
    <property type="match status" value="1"/>
</dbReference>
<dbReference type="Pfam" id="PF00569">
    <property type="entry name" value="ZZ"/>
    <property type="match status" value="1"/>
</dbReference>
<dbReference type="PIRSF" id="PIRSF038205">
    <property type="entry name" value="Dystrophin-related_p2"/>
    <property type="match status" value="1"/>
</dbReference>
<dbReference type="SMART" id="SM00150">
    <property type="entry name" value="SPEC"/>
    <property type="match status" value="2"/>
</dbReference>
<dbReference type="SMART" id="SM00456">
    <property type="entry name" value="WW"/>
    <property type="match status" value="1"/>
</dbReference>
<dbReference type="SMART" id="SM00291">
    <property type="entry name" value="ZnF_ZZ"/>
    <property type="match status" value="1"/>
</dbReference>
<dbReference type="SUPFAM" id="SSF47473">
    <property type="entry name" value="EF-hand"/>
    <property type="match status" value="2"/>
</dbReference>
<dbReference type="SUPFAM" id="SSF57850">
    <property type="entry name" value="RING/U-box"/>
    <property type="match status" value="1"/>
</dbReference>
<dbReference type="SUPFAM" id="SSF46966">
    <property type="entry name" value="Spectrin repeat"/>
    <property type="match status" value="2"/>
</dbReference>
<dbReference type="SUPFAM" id="SSF51045">
    <property type="entry name" value="WW domain"/>
    <property type="match status" value="1"/>
</dbReference>
<dbReference type="PROSITE" id="PS01159">
    <property type="entry name" value="WW_DOMAIN_1"/>
    <property type="match status" value="1"/>
</dbReference>
<dbReference type="PROSITE" id="PS50020">
    <property type="entry name" value="WW_DOMAIN_2"/>
    <property type="match status" value="1"/>
</dbReference>
<dbReference type="PROSITE" id="PS01357">
    <property type="entry name" value="ZF_ZZ_1"/>
    <property type="match status" value="1"/>
</dbReference>
<dbReference type="PROSITE" id="PS50135">
    <property type="entry name" value="ZF_ZZ_2"/>
    <property type="match status" value="1"/>
</dbReference>